<comment type="similarity">
    <text evidence="1">Belongs to the UPF0149 family.</text>
</comment>
<dbReference type="EMBL" id="AP009240">
    <property type="protein sequence ID" value="BAG78696.1"/>
    <property type="molecule type" value="Genomic_DNA"/>
</dbReference>
<dbReference type="RefSeq" id="WP_001295378.1">
    <property type="nucleotide sequence ID" value="NC_011415.1"/>
</dbReference>
<dbReference type="SMR" id="B6I742"/>
<dbReference type="GeneID" id="93779092"/>
<dbReference type="KEGG" id="ecy:ECSE_3172"/>
<dbReference type="HOGENOM" id="CLU_085336_1_0_6"/>
<dbReference type="Proteomes" id="UP000008199">
    <property type="component" value="Chromosome"/>
</dbReference>
<dbReference type="GO" id="GO:0005829">
    <property type="term" value="C:cytosol"/>
    <property type="evidence" value="ECO:0007669"/>
    <property type="project" value="TreeGrafter"/>
</dbReference>
<dbReference type="FunFam" id="1.20.120.740:FF:000001">
    <property type="entry name" value="UPF0149 protein YgfB"/>
    <property type="match status" value="1"/>
</dbReference>
<dbReference type="Gene3D" id="1.20.120.740">
    <property type="entry name" value="YgfB uncharacterised protein family UPF0149, PF03695"/>
    <property type="match status" value="1"/>
</dbReference>
<dbReference type="HAMAP" id="MF_00346">
    <property type="entry name" value="UPF0149"/>
    <property type="match status" value="1"/>
</dbReference>
<dbReference type="InterPro" id="IPR011978">
    <property type="entry name" value="YgfB-like"/>
</dbReference>
<dbReference type="InterPro" id="IPR036255">
    <property type="entry name" value="YgfB-like_sf"/>
</dbReference>
<dbReference type="NCBIfam" id="NF002477">
    <property type="entry name" value="PRK01736.1"/>
    <property type="match status" value="1"/>
</dbReference>
<dbReference type="NCBIfam" id="TIGR02292">
    <property type="entry name" value="ygfB_yecA"/>
    <property type="match status" value="1"/>
</dbReference>
<dbReference type="PANTHER" id="PTHR37528">
    <property type="entry name" value="UPF0149 PROTEIN YGFB"/>
    <property type="match status" value="1"/>
</dbReference>
<dbReference type="PANTHER" id="PTHR37528:SF1">
    <property type="entry name" value="UPF0149 PROTEIN YGFB"/>
    <property type="match status" value="1"/>
</dbReference>
<dbReference type="Pfam" id="PF03695">
    <property type="entry name" value="UPF0149"/>
    <property type="match status" value="1"/>
</dbReference>
<dbReference type="SUPFAM" id="SSF101327">
    <property type="entry name" value="YgfB-like"/>
    <property type="match status" value="1"/>
</dbReference>
<name>YGFB_ECOSE</name>
<feature type="chain" id="PRO_1000120472" description="UPF0149 protein YgfB">
    <location>
        <begin position="1"/>
        <end position="192"/>
    </location>
</feature>
<evidence type="ECO:0000255" key="1">
    <source>
        <dbReference type="HAMAP-Rule" id="MF_00346"/>
    </source>
</evidence>
<protein>
    <recommendedName>
        <fullName evidence="1">UPF0149 protein YgfB</fullName>
    </recommendedName>
</protein>
<reference key="1">
    <citation type="journal article" date="2008" name="DNA Res.">
        <title>Complete genome sequence and comparative analysis of the wild-type commensal Escherichia coli strain SE11 isolated from a healthy adult.</title>
        <authorList>
            <person name="Oshima K."/>
            <person name="Toh H."/>
            <person name="Ogura Y."/>
            <person name="Sasamoto H."/>
            <person name="Morita H."/>
            <person name="Park S.-H."/>
            <person name="Ooka T."/>
            <person name="Iyoda S."/>
            <person name="Taylor T.D."/>
            <person name="Hayashi T."/>
            <person name="Itoh K."/>
            <person name="Hattori M."/>
        </authorList>
    </citation>
    <scope>NUCLEOTIDE SEQUENCE [LARGE SCALE GENOMIC DNA]</scope>
    <source>
        <strain>SE11</strain>
    </source>
</reference>
<proteinExistence type="inferred from homology"/>
<gene>
    <name evidence="1" type="primary">ygfB</name>
    <name type="ordered locus">ECSE_3172</name>
</gene>
<accession>B6I742</accession>
<organism>
    <name type="scientific">Escherichia coli (strain SE11)</name>
    <dbReference type="NCBI Taxonomy" id="409438"/>
    <lineage>
        <taxon>Bacteria</taxon>
        <taxon>Pseudomonadati</taxon>
        <taxon>Pseudomonadota</taxon>
        <taxon>Gammaproteobacteria</taxon>
        <taxon>Enterobacterales</taxon>
        <taxon>Enterobacteriaceae</taxon>
        <taxon>Escherichia</taxon>
    </lineage>
</organism>
<sequence>MSIQNEMPGYNEMNQYLNQQGTGLTPAEMHGLISGMICGGNDDSSWLPLLHDLTNEGMAFGHELAQALRKMHSATSDALQDDGFLFQLYLPDGDDVSVFDRADALAGWVNHFLLGLGVTQPKLDKVTGETGEAIDDLRNIAQLGYDEDEDQEELEMSLEEIIEYVRVAALLCHDTFTHPQPTAPEVQKPTLH</sequence>